<gene>
    <name evidence="1" type="primary">rplU</name>
    <name type="ordered locus">pc0217</name>
</gene>
<organism>
    <name type="scientific">Protochlamydia amoebophila (strain UWE25)</name>
    <dbReference type="NCBI Taxonomy" id="264201"/>
    <lineage>
        <taxon>Bacteria</taxon>
        <taxon>Pseudomonadati</taxon>
        <taxon>Chlamydiota</taxon>
        <taxon>Chlamydiia</taxon>
        <taxon>Parachlamydiales</taxon>
        <taxon>Parachlamydiaceae</taxon>
        <taxon>Candidatus Protochlamydia</taxon>
    </lineage>
</organism>
<comment type="function">
    <text evidence="1">This protein binds to 23S rRNA in the presence of protein L20.</text>
</comment>
<comment type="subunit">
    <text evidence="1">Part of the 50S ribosomal subunit. Contacts protein L20.</text>
</comment>
<comment type="similarity">
    <text evidence="1">Belongs to the bacterial ribosomal protein bL21 family.</text>
</comment>
<reference key="1">
    <citation type="journal article" date="2004" name="Science">
        <title>Illuminating the evolutionary history of chlamydiae.</title>
        <authorList>
            <person name="Horn M."/>
            <person name="Collingro A."/>
            <person name="Schmitz-Esser S."/>
            <person name="Beier C.L."/>
            <person name="Purkhold U."/>
            <person name="Fartmann B."/>
            <person name="Brandt P."/>
            <person name="Nyakatura G.J."/>
            <person name="Droege M."/>
            <person name="Frishman D."/>
            <person name="Rattei T."/>
            <person name="Mewes H.-W."/>
            <person name="Wagner M."/>
        </authorList>
    </citation>
    <scope>NUCLEOTIDE SEQUENCE [LARGE SCALE GENOMIC DNA]</scope>
    <source>
        <strain>UWE25</strain>
    </source>
</reference>
<evidence type="ECO:0000255" key="1">
    <source>
        <dbReference type="HAMAP-Rule" id="MF_01363"/>
    </source>
</evidence>
<evidence type="ECO:0000305" key="2"/>
<name>RL21_PARUW</name>
<accession>Q6MEQ8</accession>
<keyword id="KW-1185">Reference proteome</keyword>
<keyword id="KW-0687">Ribonucleoprotein</keyword>
<keyword id="KW-0689">Ribosomal protein</keyword>
<keyword id="KW-0694">RNA-binding</keyword>
<keyword id="KW-0699">rRNA-binding</keyword>
<protein>
    <recommendedName>
        <fullName evidence="1">Large ribosomal subunit protein bL21</fullName>
    </recommendedName>
    <alternativeName>
        <fullName evidence="2">50S ribosomal protein L21</fullName>
    </alternativeName>
</protein>
<feature type="chain" id="PRO_0000270707" description="Large ribosomal subunit protein bL21">
    <location>
        <begin position="1"/>
        <end position="114"/>
    </location>
</feature>
<dbReference type="EMBL" id="BX908798">
    <property type="protein sequence ID" value="CAF22941.1"/>
    <property type="molecule type" value="Genomic_DNA"/>
</dbReference>
<dbReference type="RefSeq" id="WP_011174767.1">
    <property type="nucleotide sequence ID" value="NC_005861.2"/>
</dbReference>
<dbReference type="SMR" id="Q6MEQ8"/>
<dbReference type="STRING" id="264201.pc0217"/>
<dbReference type="KEGG" id="pcu:PC_RS01050"/>
<dbReference type="eggNOG" id="COG0261">
    <property type="taxonomic scope" value="Bacteria"/>
</dbReference>
<dbReference type="HOGENOM" id="CLU_061463_3_2_0"/>
<dbReference type="OrthoDB" id="9813334at2"/>
<dbReference type="Proteomes" id="UP000000529">
    <property type="component" value="Chromosome"/>
</dbReference>
<dbReference type="GO" id="GO:0005737">
    <property type="term" value="C:cytoplasm"/>
    <property type="evidence" value="ECO:0007669"/>
    <property type="project" value="UniProtKB-ARBA"/>
</dbReference>
<dbReference type="GO" id="GO:1990904">
    <property type="term" value="C:ribonucleoprotein complex"/>
    <property type="evidence" value="ECO:0007669"/>
    <property type="project" value="UniProtKB-KW"/>
</dbReference>
<dbReference type="GO" id="GO:0005840">
    <property type="term" value="C:ribosome"/>
    <property type="evidence" value="ECO:0007669"/>
    <property type="project" value="UniProtKB-KW"/>
</dbReference>
<dbReference type="GO" id="GO:0019843">
    <property type="term" value="F:rRNA binding"/>
    <property type="evidence" value="ECO:0007669"/>
    <property type="project" value="UniProtKB-UniRule"/>
</dbReference>
<dbReference type="GO" id="GO:0003735">
    <property type="term" value="F:structural constituent of ribosome"/>
    <property type="evidence" value="ECO:0007669"/>
    <property type="project" value="InterPro"/>
</dbReference>
<dbReference type="GO" id="GO:0006412">
    <property type="term" value="P:translation"/>
    <property type="evidence" value="ECO:0007669"/>
    <property type="project" value="UniProtKB-UniRule"/>
</dbReference>
<dbReference type="HAMAP" id="MF_01363">
    <property type="entry name" value="Ribosomal_bL21"/>
    <property type="match status" value="1"/>
</dbReference>
<dbReference type="InterPro" id="IPR028909">
    <property type="entry name" value="bL21-like"/>
</dbReference>
<dbReference type="InterPro" id="IPR036164">
    <property type="entry name" value="bL21-like_sf"/>
</dbReference>
<dbReference type="InterPro" id="IPR001787">
    <property type="entry name" value="Ribosomal_bL21"/>
</dbReference>
<dbReference type="NCBIfam" id="TIGR00061">
    <property type="entry name" value="L21"/>
    <property type="match status" value="1"/>
</dbReference>
<dbReference type="PANTHER" id="PTHR21349">
    <property type="entry name" value="50S RIBOSOMAL PROTEIN L21"/>
    <property type="match status" value="1"/>
</dbReference>
<dbReference type="PANTHER" id="PTHR21349:SF0">
    <property type="entry name" value="LARGE RIBOSOMAL SUBUNIT PROTEIN BL21M"/>
    <property type="match status" value="1"/>
</dbReference>
<dbReference type="Pfam" id="PF00829">
    <property type="entry name" value="Ribosomal_L21p"/>
    <property type="match status" value="1"/>
</dbReference>
<dbReference type="SUPFAM" id="SSF141091">
    <property type="entry name" value="L21p-like"/>
    <property type="match status" value="1"/>
</dbReference>
<sequence length="114" mass="12589">MYAIIKTGGKQYRVQEGDIIDVELLNTDPGAQVEFGEVLFAFDGAKTQIGKPGIPNFLVYGEVVGTVKGEKVTSLKYKPSHNQCRKWGHRQHYTRVKITGIGSKRKGKEGNHGS</sequence>
<proteinExistence type="inferred from homology"/>